<protein>
    <recommendedName>
        <fullName evidence="1">Large ribosomal subunit protein uL24</fullName>
    </recommendedName>
    <alternativeName>
        <fullName evidence="2">50S ribosomal protein L24</fullName>
    </alternativeName>
</protein>
<proteinExistence type="inferred from homology"/>
<gene>
    <name evidence="1" type="primary">rplX</name>
    <name type="ordered locus">BB0042</name>
</gene>
<reference key="1">
    <citation type="journal article" date="2003" name="Nat. Genet.">
        <title>Comparative analysis of the genome sequences of Bordetella pertussis, Bordetella parapertussis and Bordetella bronchiseptica.</title>
        <authorList>
            <person name="Parkhill J."/>
            <person name="Sebaihia M."/>
            <person name="Preston A."/>
            <person name="Murphy L.D."/>
            <person name="Thomson N.R."/>
            <person name="Harris D.E."/>
            <person name="Holden M.T.G."/>
            <person name="Churcher C.M."/>
            <person name="Bentley S.D."/>
            <person name="Mungall K.L."/>
            <person name="Cerdeno-Tarraga A.-M."/>
            <person name="Temple L."/>
            <person name="James K.D."/>
            <person name="Harris B."/>
            <person name="Quail M.A."/>
            <person name="Achtman M."/>
            <person name="Atkin R."/>
            <person name="Baker S."/>
            <person name="Basham D."/>
            <person name="Bason N."/>
            <person name="Cherevach I."/>
            <person name="Chillingworth T."/>
            <person name="Collins M."/>
            <person name="Cronin A."/>
            <person name="Davis P."/>
            <person name="Doggett J."/>
            <person name="Feltwell T."/>
            <person name="Goble A."/>
            <person name="Hamlin N."/>
            <person name="Hauser H."/>
            <person name="Holroyd S."/>
            <person name="Jagels K."/>
            <person name="Leather S."/>
            <person name="Moule S."/>
            <person name="Norberczak H."/>
            <person name="O'Neil S."/>
            <person name="Ormond D."/>
            <person name="Price C."/>
            <person name="Rabbinowitsch E."/>
            <person name="Rutter S."/>
            <person name="Sanders M."/>
            <person name="Saunders D."/>
            <person name="Seeger K."/>
            <person name="Sharp S."/>
            <person name="Simmonds M."/>
            <person name="Skelton J."/>
            <person name="Squares R."/>
            <person name="Squares S."/>
            <person name="Stevens K."/>
            <person name="Unwin L."/>
            <person name="Whitehead S."/>
            <person name="Barrell B.G."/>
            <person name="Maskell D.J."/>
        </authorList>
    </citation>
    <scope>NUCLEOTIDE SEQUENCE [LARGE SCALE GENOMIC DNA]</scope>
    <source>
        <strain>ATCC BAA-588 / NCTC 13252 / RB50</strain>
    </source>
</reference>
<sequence>MNNIRKGDEVIVLTGRDKKRRGTVLARVDADHVLVEGVNVVKKHVKANPMANNPGGIVEKTMPIHVSNVALFNPATGKGDRVGVQEVDGRKVRVFRSNGAVVGAKA</sequence>
<feature type="chain" id="PRO_0000130626" description="Large ribosomal subunit protein uL24">
    <location>
        <begin position="1"/>
        <end position="106"/>
    </location>
</feature>
<evidence type="ECO:0000255" key="1">
    <source>
        <dbReference type="HAMAP-Rule" id="MF_01326"/>
    </source>
</evidence>
<evidence type="ECO:0000305" key="2"/>
<dbReference type="EMBL" id="BX640437">
    <property type="protein sequence ID" value="CAE30544.1"/>
    <property type="molecule type" value="Genomic_DNA"/>
</dbReference>
<dbReference type="RefSeq" id="WP_003806917.1">
    <property type="nucleotide sequence ID" value="NC_002927.3"/>
</dbReference>
<dbReference type="SMR" id="Q7WRB2"/>
<dbReference type="GeneID" id="93206272"/>
<dbReference type="KEGG" id="bbr:BB0042"/>
<dbReference type="eggNOG" id="COG0198">
    <property type="taxonomic scope" value="Bacteria"/>
</dbReference>
<dbReference type="HOGENOM" id="CLU_093315_2_2_4"/>
<dbReference type="Proteomes" id="UP000001027">
    <property type="component" value="Chromosome"/>
</dbReference>
<dbReference type="GO" id="GO:1990904">
    <property type="term" value="C:ribonucleoprotein complex"/>
    <property type="evidence" value="ECO:0007669"/>
    <property type="project" value="UniProtKB-KW"/>
</dbReference>
<dbReference type="GO" id="GO:0005840">
    <property type="term" value="C:ribosome"/>
    <property type="evidence" value="ECO:0007669"/>
    <property type="project" value="UniProtKB-KW"/>
</dbReference>
<dbReference type="GO" id="GO:0019843">
    <property type="term" value="F:rRNA binding"/>
    <property type="evidence" value="ECO:0007669"/>
    <property type="project" value="UniProtKB-UniRule"/>
</dbReference>
<dbReference type="GO" id="GO:0003735">
    <property type="term" value="F:structural constituent of ribosome"/>
    <property type="evidence" value="ECO:0007669"/>
    <property type="project" value="InterPro"/>
</dbReference>
<dbReference type="GO" id="GO:0006412">
    <property type="term" value="P:translation"/>
    <property type="evidence" value="ECO:0007669"/>
    <property type="project" value="UniProtKB-UniRule"/>
</dbReference>
<dbReference type="CDD" id="cd06089">
    <property type="entry name" value="KOW_RPL26"/>
    <property type="match status" value="1"/>
</dbReference>
<dbReference type="FunFam" id="2.30.30.30:FF:000004">
    <property type="entry name" value="50S ribosomal protein L24"/>
    <property type="match status" value="1"/>
</dbReference>
<dbReference type="Gene3D" id="2.30.30.30">
    <property type="match status" value="1"/>
</dbReference>
<dbReference type="HAMAP" id="MF_01326_B">
    <property type="entry name" value="Ribosomal_uL24_B"/>
    <property type="match status" value="1"/>
</dbReference>
<dbReference type="InterPro" id="IPR014722">
    <property type="entry name" value="Rib_uL2_dom2"/>
</dbReference>
<dbReference type="InterPro" id="IPR003256">
    <property type="entry name" value="Ribosomal_uL24"/>
</dbReference>
<dbReference type="InterPro" id="IPR005825">
    <property type="entry name" value="Ribosomal_uL24_CS"/>
</dbReference>
<dbReference type="InterPro" id="IPR041988">
    <property type="entry name" value="Ribosomal_uL24_KOW"/>
</dbReference>
<dbReference type="InterPro" id="IPR008991">
    <property type="entry name" value="Translation_prot_SH3-like_sf"/>
</dbReference>
<dbReference type="NCBIfam" id="TIGR01079">
    <property type="entry name" value="rplX_bact"/>
    <property type="match status" value="1"/>
</dbReference>
<dbReference type="PANTHER" id="PTHR12903">
    <property type="entry name" value="MITOCHONDRIAL RIBOSOMAL PROTEIN L24"/>
    <property type="match status" value="1"/>
</dbReference>
<dbReference type="Pfam" id="PF17136">
    <property type="entry name" value="ribosomal_L24"/>
    <property type="match status" value="1"/>
</dbReference>
<dbReference type="SUPFAM" id="SSF50104">
    <property type="entry name" value="Translation proteins SH3-like domain"/>
    <property type="match status" value="1"/>
</dbReference>
<dbReference type="PROSITE" id="PS01108">
    <property type="entry name" value="RIBOSOMAL_L24"/>
    <property type="match status" value="1"/>
</dbReference>
<keyword id="KW-0687">Ribonucleoprotein</keyword>
<keyword id="KW-0689">Ribosomal protein</keyword>
<keyword id="KW-0694">RNA-binding</keyword>
<keyword id="KW-0699">rRNA-binding</keyword>
<name>RL24_BORBR</name>
<accession>Q7WRB2</accession>
<comment type="function">
    <text evidence="1">One of two assembly initiator proteins, it binds directly to the 5'-end of the 23S rRNA, where it nucleates assembly of the 50S subunit.</text>
</comment>
<comment type="function">
    <text evidence="1">One of the proteins that surrounds the polypeptide exit tunnel on the outside of the subunit.</text>
</comment>
<comment type="subunit">
    <text evidence="1">Part of the 50S ribosomal subunit.</text>
</comment>
<comment type="similarity">
    <text evidence="1">Belongs to the universal ribosomal protein uL24 family.</text>
</comment>
<organism>
    <name type="scientific">Bordetella bronchiseptica (strain ATCC BAA-588 / NCTC 13252 / RB50)</name>
    <name type="common">Alcaligenes bronchisepticus</name>
    <dbReference type="NCBI Taxonomy" id="257310"/>
    <lineage>
        <taxon>Bacteria</taxon>
        <taxon>Pseudomonadati</taxon>
        <taxon>Pseudomonadota</taxon>
        <taxon>Betaproteobacteria</taxon>
        <taxon>Burkholderiales</taxon>
        <taxon>Alcaligenaceae</taxon>
        <taxon>Bordetella</taxon>
    </lineage>
</organism>